<dbReference type="EMBL" id="AC005322">
    <property type="protein sequence ID" value="AAC97992.1"/>
    <property type="status" value="ALT_SEQ"/>
    <property type="molecule type" value="Genomic_DNA"/>
</dbReference>
<dbReference type="EMBL" id="CP002684">
    <property type="protein sequence ID" value="AEE27788.1"/>
    <property type="molecule type" value="Genomic_DNA"/>
</dbReference>
<dbReference type="PIR" id="H86184">
    <property type="entry name" value="H86184"/>
</dbReference>
<dbReference type="RefSeq" id="NP_172001.1">
    <property type="nucleotide sequence ID" value="NM_100387.1"/>
</dbReference>
<dbReference type="iPTMnet" id="Q9ZVP2"/>
<dbReference type="PaxDb" id="3702-AT1G05080.1"/>
<dbReference type="EnsemblPlants" id="AT1G05080.1">
    <property type="protein sequence ID" value="AT1G05080.1"/>
    <property type="gene ID" value="AT1G05080"/>
</dbReference>
<dbReference type="GeneID" id="839328"/>
<dbReference type="Gramene" id="AT1G05080.1">
    <property type="protein sequence ID" value="AT1G05080.1"/>
    <property type="gene ID" value="AT1G05080"/>
</dbReference>
<dbReference type="KEGG" id="ath:AT1G05080"/>
<dbReference type="Araport" id="AT1G05080"/>
<dbReference type="TAIR" id="AT1G05080"/>
<dbReference type="HOGENOM" id="CLU_010721_1_2_1"/>
<dbReference type="InParanoid" id="Q9ZVP2"/>
<dbReference type="OMA" id="DAMVMRC"/>
<dbReference type="PRO" id="PR:Q9ZVP2"/>
<dbReference type="Proteomes" id="UP000006548">
    <property type="component" value="Chromosome 1"/>
</dbReference>
<dbReference type="ExpressionAtlas" id="Q9ZVP2">
    <property type="expression patterns" value="baseline and differential"/>
</dbReference>
<dbReference type="Gene3D" id="3.80.10.10">
    <property type="entry name" value="Ribonuclease Inhibitor"/>
    <property type="match status" value="1"/>
</dbReference>
<dbReference type="InterPro" id="IPR036047">
    <property type="entry name" value="F-box-like_dom_sf"/>
</dbReference>
<dbReference type="InterPro" id="IPR001810">
    <property type="entry name" value="F-box_dom"/>
</dbReference>
<dbReference type="InterPro" id="IPR006566">
    <property type="entry name" value="FBD"/>
</dbReference>
<dbReference type="InterPro" id="IPR050232">
    <property type="entry name" value="FBL13/AtMIF1-like"/>
</dbReference>
<dbReference type="InterPro" id="IPR032675">
    <property type="entry name" value="LRR_dom_sf"/>
</dbReference>
<dbReference type="InterPro" id="IPR055411">
    <property type="entry name" value="LRR_FXL15/At3g58940/PEG3-like"/>
</dbReference>
<dbReference type="PANTHER" id="PTHR31900:SF34">
    <property type="entry name" value="EMB|CAB62440.1-RELATED"/>
    <property type="match status" value="1"/>
</dbReference>
<dbReference type="PANTHER" id="PTHR31900">
    <property type="entry name" value="F-BOX/RNI SUPERFAMILY PROTEIN-RELATED"/>
    <property type="match status" value="1"/>
</dbReference>
<dbReference type="Pfam" id="PF00646">
    <property type="entry name" value="F-box"/>
    <property type="match status" value="1"/>
</dbReference>
<dbReference type="Pfam" id="PF08387">
    <property type="entry name" value="FBD"/>
    <property type="match status" value="1"/>
</dbReference>
<dbReference type="Pfam" id="PF24758">
    <property type="entry name" value="LRR_At5g56370"/>
    <property type="match status" value="1"/>
</dbReference>
<dbReference type="SMART" id="SM00579">
    <property type="entry name" value="FBD"/>
    <property type="match status" value="1"/>
</dbReference>
<dbReference type="SUPFAM" id="SSF81383">
    <property type="entry name" value="F-box domain"/>
    <property type="match status" value="1"/>
</dbReference>
<dbReference type="SUPFAM" id="SSF52047">
    <property type="entry name" value="RNI-like"/>
    <property type="match status" value="1"/>
</dbReference>
<dbReference type="PROSITE" id="PS50181">
    <property type="entry name" value="FBOX"/>
    <property type="match status" value="1"/>
</dbReference>
<organism>
    <name type="scientific">Arabidopsis thaliana</name>
    <name type="common">Mouse-ear cress</name>
    <dbReference type="NCBI Taxonomy" id="3702"/>
    <lineage>
        <taxon>Eukaryota</taxon>
        <taxon>Viridiplantae</taxon>
        <taxon>Streptophyta</taxon>
        <taxon>Embryophyta</taxon>
        <taxon>Tracheophyta</taxon>
        <taxon>Spermatophyta</taxon>
        <taxon>Magnoliopsida</taxon>
        <taxon>eudicotyledons</taxon>
        <taxon>Gunneridae</taxon>
        <taxon>Pentapetalae</taxon>
        <taxon>rosids</taxon>
        <taxon>malvids</taxon>
        <taxon>Brassicales</taxon>
        <taxon>Brassicaceae</taxon>
        <taxon>Camelineae</taxon>
        <taxon>Arabidopsis</taxon>
    </lineage>
</organism>
<feature type="chain" id="PRO_0000396021" description="Putative FBD-associated F-box protein At1g05080">
    <location>
        <begin position="1"/>
        <end position="439"/>
    </location>
</feature>
<feature type="domain" description="F-box" evidence="1">
    <location>
        <begin position="12"/>
        <end position="58"/>
    </location>
</feature>
<feature type="domain" description="FBD">
    <location>
        <begin position="360"/>
        <end position="410"/>
    </location>
</feature>
<proteinExistence type="predicted"/>
<gene>
    <name type="ordered locus">At1g05080</name>
    <name type="ORF">T7A14.5</name>
</gene>
<protein>
    <recommendedName>
        <fullName>Putative FBD-associated F-box protein At1g05080</fullName>
    </recommendedName>
</protein>
<sequence length="439" mass="49884">MAEAKIEEIGCEDRISVLPEDLLVVILDLLPTKDVVATMILSKRWLSIWTMVRTLEYTDDMDDESKKSVWWFLNKSLQLHKAPVIDSLCMELGPQCPTTDDVDIGKWVAKAVDCLVMTLTIKLLWSAGPTSLPKSLYSCTSLSELTLSDQILVNVPSSAYLPSLTELELICVVYKDEDSLVSFLSSCPVLEFLFVLRKIDDNVKTFTVKVPSLLELTYKNLCSDVVDNTDRCLVVNAPAVNTCQITDYSLESFSIEDMPCLQDATIDVDEAYHPDDKFLTSFSSVLSLRMHLSDAMVMRCTTINFSRLIKLSIYPYGPDMLETLLRLLGNAPKLKEFLVDYPSLIASQKFVYNPEDLPWSWKQPSHVPECLSSQLEIFEWRDYGDRIIEEEFLTYVLANSKRLKTATISLRLNLEDPELIIEEIKDLPRVSTTSHLLFK</sequence>
<name>FBD34_ARATH</name>
<comment type="sequence caution" evidence="2">
    <conflict type="erroneous gene model prediction">
        <sequence resource="EMBL-CDS" id="AAC97992"/>
    </conflict>
</comment>
<evidence type="ECO:0000255" key="1">
    <source>
        <dbReference type="PROSITE-ProRule" id="PRU00080"/>
    </source>
</evidence>
<evidence type="ECO:0000305" key="2"/>
<keyword id="KW-1185">Reference proteome</keyword>
<accession>Q9ZVP2</accession>
<accession>F4I791</accession>
<reference key="1">
    <citation type="journal article" date="2000" name="Nature">
        <title>Sequence and analysis of chromosome 1 of the plant Arabidopsis thaliana.</title>
        <authorList>
            <person name="Theologis A."/>
            <person name="Ecker J.R."/>
            <person name="Palm C.J."/>
            <person name="Federspiel N.A."/>
            <person name="Kaul S."/>
            <person name="White O."/>
            <person name="Alonso J."/>
            <person name="Altafi H."/>
            <person name="Araujo R."/>
            <person name="Bowman C.L."/>
            <person name="Brooks S.Y."/>
            <person name="Buehler E."/>
            <person name="Chan A."/>
            <person name="Chao Q."/>
            <person name="Chen H."/>
            <person name="Cheuk R.F."/>
            <person name="Chin C.W."/>
            <person name="Chung M.K."/>
            <person name="Conn L."/>
            <person name="Conway A.B."/>
            <person name="Conway A.R."/>
            <person name="Creasy T.H."/>
            <person name="Dewar K."/>
            <person name="Dunn P."/>
            <person name="Etgu P."/>
            <person name="Feldblyum T.V."/>
            <person name="Feng J.-D."/>
            <person name="Fong B."/>
            <person name="Fujii C.Y."/>
            <person name="Gill J.E."/>
            <person name="Goldsmith A.D."/>
            <person name="Haas B."/>
            <person name="Hansen N.F."/>
            <person name="Hughes B."/>
            <person name="Huizar L."/>
            <person name="Hunter J.L."/>
            <person name="Jenkins J."/>
            <person name="Johnson-Hopson C."/>
            <person name="Khan S."/>
            <person name="Khaykin E."/>
            <person name="Kim C.J."/>
            <person name="Koo H.L."/>
            <person name="Kremenetskaia I."/>
            <person name="Kurtz D.B."/>
            <person name="Kwan A."/>
            <person name="Lam B."/>
            <person name="Langin-Hooper S."/>
            <person name="Lee A."/>
            <person name="Lee J.M."/>
            <person name="Lenz C.A."/>
            <person name="Li J.H."/>
            <person name="Li Y.-P."/>
            <person name="Lin X."/>
            <person name="Liu S.X."/>
            <person name="Liu Z.A."/>
            <person name="Luros J.S."/>
            <person name="Maiti R."/>
            <person name="Marziali A."/>
            <person name="Militscher J."/>
            <person name="Miranda M."/>
            <person name="Nguyen M."/>
            <person name="Nierman W.C."/>
            <person name="Osborne B.I."/>
            <person name="Pai G."/>
            <person name="Peterson J."/>
            <person name="Pham P.K."/>
            <person name="Rizzo M."/>
            <person name="Rooney T."/>
            <person name="Rowley D."/>
            <person name="Sakano H."/>
            <person name="Salzberg S.L."/>
            <person name="Schwartz J.R."/>
            <person name="Shinn P."/>
            <person name="Southwick A.M."/>
            <person name="Sun H."/>
            <person name="Tallon L.J."/>
            <person name="Tambunga G."/>
            <person name="Toriumi M.J."/>
            <person name="Town C.D."/>
            <person name="Utterback T."/>
            <person name="Van Aken S."/>
            <person name="Vaysberg M."/>
            <person name="Vysotskaia V.S."/>
            <person name="Walker M."/>
            <person name="Wu D."/>
            <person name="Yu G."/>
            <person name="Fraser C.M."/>
            <person name="Venter J.C."/>
            <person name="Davis R.W."/>
        </authorList>
    </citation>
    <scope>NUCLEOTIDE SEQUENCE [LARGE SCALE GENOMIC DNA]</scope>
    <source>
        <strain>cv. Columbia</strain>
    </source>
</reference>
<reference key="2">
    <citation type="journal article" date="2017" name="Plant J.">
        <title>Araport11: a complete reannotation of the Arabidopsis thaliana reference genome.</title>
        <authorList>
            <person name="Cheng C.Y."/>
            <person name="Krishnakumar V."/>
            <person name="Chan A.P."/>
            <person name="Thibaud-Nissen F."/>
            <person name="Schobel S."/>
            <person name="Town C.D."/>
        </authorList>
    </citation>
    <scope>GENOME REANNOTATION</scope>
    <source>
        <strain>cv. Columbia</strain>
    </source>
</reference>